<organism>
    <name type="scientific">Enterococcus faecium</name>
    <name type="common">Streptococcus faecium</name>
    <dbReference type="NCBI Taxonomy" id="1352"/>
    <lineage>
        <taxon>Bacteria</taxon>
        <taxon>Bacillati</taxon>
        <taxon>Bacillota</taxon>
        <taxon>Bacilli</taxon>
        <taxon>Lactobacillales</taxon>
        <taxon>Enterococcaceae</taxon>
        <taxon>Enterococcus</taxon>
    </lineage>
</organism>
<evidence type="ECO:0000269" key="1">
    <source>
    </source>
</evidence>
<evidence type="ECO:0000269" key="2">
    <source>
    </source>
</evidence>
<evidence type="ECO:0000269" key="3">
    <source>
    </source>
</evidence>
<evidence type="ECO:0000305" key="4"/>
<evidence type="ECO:0007829" key="5">
    <source>
        <dbReference type="PDB" id="1B7B"/>
    </source>
</evidence>
<protein>
    <recommendedName>
        <fullName>Carbamate kinase 1</fullName>
        <ecNumber>2.7.2.2</ecNumber>
    </recommendedName>
</protein>
<dbReference type="EC" id="2.7.2.2"/>
<dbReference type="EMBL" id="AJ223331">
    <property type="protein sequence ID" value="CAA11270.1"/>
    <property type="molecule type" value="Genomic_DNA"/>
</dbReference>
<dbReference type="PIR" id="S44002">
    <property type="entry name" value="S44002"/>
</dbReference>
<dbReference type="PDB" id="1B7B">
    <property type="method" value="X-ray"/>
    <property type="resolution" value="2.80 A"/>
    <property type="chains" value="A/B/C/D=1-310"/>
</dbReference>
<dbReference type="PDBsum" id="1B7B"/>
<dbReference type="SMR" id="P0A2X8"/>
<dbReference type="UniPathway" id="UPA00996">
    <property type="reaction ID" value="UER00366"/>
</dbReference>
<dbReference type="EvolutionaryTrace" id="P0A2X8"/>
<dbReference type="GO" id="GO:0005829">
    <property type="term" value="C:cytosol"/>
    <property type="evidence" value="ECO:0007669"/>
    <property type="project" value="TreeGrafter"/>
</dbReference>
<dbReference type="GO" id="GO:0005524">
    <property type="term" value="F:ATP binding"/>
    <property type="evidence" value="ECO:0007669"/>
    <property type="project" value="UniProtKB-KW"/>
</dbReference>
<dbReference type="GO" id="GO:0008804">
    <property type="term" value="F:carbamate kinase activity"/>
    <property type="evidence" value="ECO:0007669"/>
    <property type="project" value="UniProtKB-EC"/>
</dbReference>
<dbReference type="GO" id="GO:0019546">
    <property type="term" value="P:arginine deiminase pathway"/>
    <property type="evidence" value="ECO:0007669"/>
    <property type="project" value="TreeGrafter"/>
</dbReference>
<dbReference type="CDD" id="cd04235">
    <property type="entry name" value="AAK_CK"/>
    <property type="match status" value="1"/>
</dbReference>
<dbReference type="FunFam" id="3.40.1160.10:FF:000007">
    <property type="entry name" value="Carbamate kinase"/>
    <property type="match status" value="1"/>
</dbReference>
<dbReference type="Gene3D" id="3.40.1160.10">
    <property type="entry name" value="Acetylglutamate kinase-like"/>
    <property type="match status" value="1"/>
</dbReference>
<dbReference type="InterPro" id="IPR036393">
    <property type="entry name" value="AceGlu_kinase-like_sf"/>
</dbReference>
<dbReference type="InterPro" id="IPR001048">
    <property type="entry name" value="Asp/Glu/Uridylate_kinase"/>
</dbReference>
<dbReference type="InterPro" id="IPR003964">
    <property type="entry name" value="Carb_kinase"/>
</dbReference>
<dbReference type="NCBIfam" id="TIGR00746">
    <property type="entry name" value="arcC"/>
    <property type="match status" value="1"/>
</dbReference>
<dbReference type="NCBIfam" id="NF009007">
    <property type="entry name" value="PRK12352.1"/>
    <property type="match status" value="1"/>
</dbReference>
<dbReference type="PANTHER" id="PTHR30409">
    <property type="entry name" value="CARBAMATE KINASE"/>
    <property type="match status" value="1"/>
</dbReference>
<dbReference type="PANTHER" id="PTHR30409:SF1">
    <property type="entry name" value="CARBAMATE KINASE-RELATED"/>
    <property type="match status" value="1"/>
</dbReference>
<dbReference type="Pfam" id="PF00696">
    <property type="entry name" value="AA_kinase"/>
    <property type="match status" value="1"/>
</dbReference>
<dbReference type="PIRSF" id="PIRSF000723">
    <property type="entry name" value="Carbamate_kin"/>
    <property type="match status" value="1"/>
</dbReference>
<dbReference type="PRINTS" id="PR01469">
    <property type="entry name" value="CARBMTKINASE"/>
</dbReference>
<dbReference type="SUPFAM" id="SSF53633">
    <property type="entry name" value="Carbamate kinase-like"/>
    <property type="match status" value="1"/>
</dbReference>
<proteinExistence type="evidence at protein level"/>
<reference key="1">
    <citation type="journal article" date="1998" name="Eur. J. Biochem.">
        <title>Carbamate kinase from Enterococcus faecalis and Enterococcus faecium: cloning of the genes, studies on the enzyme expressed in Escherichia coli, and sequence similarity with N-acetyl-L-glutamate kinase.</title>
        <authorList>
            <person name="Marina A."/>
            <person name="Uriarte M."/>
            <person name="Barcelona B."/>
            <person name="Fresquet V."/>
            <person name="Cervera J."/>
            <person name="Rubio V."/>
        </authorList>
    </citation>
    <scope>NUCLEOTIDE SEQUENCE [GENOMIC DNA]</scope>
    <scope>CHARACTERIZATION</scope>
    <scope>MASS SPECTROMETRY</scope>
    <source>
        <strain>D10</strain>
    </source>
</reference>
<reference key="2">
    <citation type="journal article" date="1994" name="J. Mol. Biol.">
        <title>Crystallization, characterization and preliminary crystallographic studies of carbamate kinase of Streptococcus faecium.</title>
        <authorList>
            <person name="Marina A."/>
            <person name="Bravo J."/>
            <person name="Fita I."/>
            <person name="Rubio V."/>
        </authorList>
    </citation>
    <scope>PROTEIN SEQUENCE OF 2-33 AND 159-169</scope>
    <scope>CHARACTERIZATION</scope>
    <source>
        <strain>D10</strain>
    </source>
</reference>
<reference key="3">
    <citation type="journal article" date="1999" name="Protein Sci.">
        <title>Carbamate kinase: new structural machinery for making carbamoyl phosphate, the common precursor of pyrimidines and arginine.</title>
        <authorList>
            <person name="Marina A."/>
            <person name="Alzari P.M."/>
            <person name="Bravo J."/>
            <person name="Uriarte M."/>
            <person name="Barcelona B."/>
            <person name="Fita I."/>
            <person name="Rubio V."/>
        </authorList>
    </citation>
    <scope>X-RAY CRYSTALLOGRAPHY (2.8 ANGSTROMS)</scope>
    <scope>MUTAGENESIS OF GLU-136; GLU-138; LYS-140; GLU-141; ASP-208 AND ASP-210</scope>
    <source>
        <strain>D10</strain>
    </source>
</reference>
<sequence>MGKKMVVALGGNAILSNDASAHAQQQALVQTSAYLVHLIKQGHRLIVSHGNGPQVGNLLLQQQAADSEKNPAMPLDTCVAMTQGSIGYWLSNALNQELNKAGIKKQVATVLTQVVVDPADEAFKNPTKPIGPFLTEAEAKEAMQAGAIFKEDAGRGWRKVVPSPKPIDIHEAETINTLIKNDIITISCGGGGIPVVGQELKGVEAVIDKDFASEKLAELVDADALVILTGVDYVCINYGKPDEKQLTNVTVAELEEYKQAGHFAPGSMLPKIEAAIQFVESQPNKQAIITSLENLGSMSGDEIVGTVVTK</sequence>
<accession>P0A2X8</accession>
<accession>O54531</accession>
<accession>P35836</accession>
<feature type="initiator methionine" description="Removed" evidence="2">
    <location>
        <position position="1"/>
    </location>
</feature>
<feature type="chain" id="PRO_0000185124" description="Carbamate kinase 1">
    <location>
        <begin position="2"/>
        <end position="310"/>
    </location>
</feature>
<feature type="mutagenesis site" description="No change in activity; when associated with A-138; A-140 and A-141." evidence="1">
    <original>E</original>
    <variation>A</variation>
    <location>
        <position position="136"/>
    </location>
</feature>
<feature type="mutagenesis site" description="No change in activity; when associated with A-136; A-140 and A-141." evidence="1">
    <original>E</original>
    <variation>A</variation>
    <location>
        <position position="138"/>
    </location>
</feature>
<feature type="mutagenesis site" description="No change in activity; when associated with A-136; A-138 and A-141." evidence="1">
    <original>K</original>
    <variation>A</variation>
    <location>
        <position position="140"/>
    </location>
</feature>
<feature type="mutagenesis site" description="No change in activity; when associated with A-136; A-138 and A-140." evidence="1">
    <original>E</original>
    <variation>A</variation>
    <location>
        <position position="141"/>
    </location>
</feature>
<feature type="mutagenesis site" description="Almost no activity; when associated with A-210." evidence="1">
    <original>D</original>
    <variation>A</variation>
    <location>
        <position position="208"/>
    </location>
</feature>
<feature type="mutagenesis site" description="Almost no activity; when associated with A-208." evidence="1">
    <original>D</original>
    <variation>A</variation>
    <location>
        <position position="210"/>
    </location>
</feature>
<feature type="sequence conflict" description="In Ref. 2; AA sequence." evidence="4" ref="2">
    <original>I</original>
    <variation>D</variation>
    <location>
        <position position="169"/>
    </location>
</feature>
<feature type="strand" evidence="5">
    <location>
        <begin position="4"/>
        <end position="9"/>
    </location>
</feature>
<feature type="helix" evidence="5">
    <location>
        <begin position="11"/>
        <end position="14"/>
    </location>
</feature>
<feature type="helix" evidence="5">
    <location>
        <begin position="21"/>
        <end position="40"/>
    </location>
</feature>
<feature type="strand" evidence="5">
    <location>
        <begin position="44"/>
        <end position="49"/>
    </location>
</feature>
<feature type="helix" evidence="5">
    <location>
        <begin position="52"/>
        <end position="64"/>
    </location>
</feature>
<feature type="strand" evidence="5">
    <location>
        <begin position="67"/>
        <end position="70"/>
    </location>
</feature>
<feature type="helix" evidence="5">
    <location>
        <begin position="75"/>
        <end position="100"/>
    </location>
</feature>
<feature type="strand" evidence="5">
    <location>
        <begin position="106"/>
        <end position="110"/>
    </location>
</feature>
<feature type="strand" evidence="5">
    <location>
        <begin position="113"/>
        <end position="116"/>
    </location>
</feature>
<feature type="helix" evidence="5">
    <location>
        <begin position="121"/>
        <end position="123"/>
    </location>
</feature>
<feature type="strand" evidence="5">
    <location>
        <begin position="128"/>
        <end position="134"/>
    </location>
</feature>
<feature type="helix" evidence="5">
    <location>
        <begin position="136"/>
        <end position="143"/>
    </location>
</feature>
<feature type="turn" evidence="5">
    <location>
        <begin position="144"/>
        <end position="146"/>
    </location>
</feature>
<feature type="strand" evidence="5">
    <location>
        <begin position="149"/>
        <end position="152"/>
    </location>
</feature>
<feature type="turn" evidence="5">
    <location>
        <begin position="153"/>
        <end position="155"/>
    </location>
</feature>
<feature type="strand" evidence="5">
    <location>
        <begin position="156"/>
        <end position="161"/>
    </location>
</feature>
<feature type="strand" evidence="5">
    <location>
        <begin position="166"/>
        <end position="169"/>
    </location>
</feature>
<feature type="helix" evidence="5">
    <location>
        <begin position="172"/>
        <end position="180"/>
    </location>
</feature>
<feature type="strand" evidence="5">
    <location>
        <begin position="183"/>
        <end position="186"/>
    </location>
</feature>
<feature type="helix" evidence="5">
    <location>
        <begin position="189"/>
        <end position="191"/>
    </location>
</feature>
<feature type="strand" evidence="5">
    <location>
        <begin position="193"/>
        <end position="196"/>
    </location>
</feature>
<feature type="turn" evidence="5">
    <location>
        <begin position="197"/>
        <end position="200"/>
    </location>
</feature>
<feature type="helix" evidence="5">
    <location>
        <begin position="209"/>
        <end position="220"/>
    </location>
</feature>
<feature type="strand" evidence="5">
    <location>
        <begin position="223"/>
        <end position="228"/>
    </location>
</feature>
<feature type="strand" evidence="5">
    <location>
        <begin position="230"/>
        <end position="233"/>
    </location>
</feature>
<feature type="turn" evidence="5">
    <location>
        <begin position="237"/>
        <end position="239"/>
    </location>
</feature>
<feature type="strand" evidence="5">
    <location>
        <begin position="247"/>
        <end position="250"/>
    </location>
</feature>
<feature type="helix" evidence="5">
    <location>
        <begin position="251"/>
        <end position="259"/>
    </location>
</feature>
<feature type="turn" evidence="5">
    <location>
        <begin position="265"/>
        <end position="267"/>
    </location>
</feature>
<feature type="helix" evidence="5">
    <location>
        <begin position="268"/>
        <end position="279"/>
    </location>
</feature>
<feature type="strand" evidence="5">
    <location>
        <begin position="286"/>
        <end position="290"/>
    </location>
</feature>
<feature type="helix" evidence="5">
    <location>
        <begin position="292"/>
        <end position="295"/>
    </location>
</feature>
<feature type="strand" evidence="5">
    <location>
        <begin position="304"/>
        <end position="306"/>
    </location>
</feature>
<gene>
    <name type="primary">arcC1</name>
    <name type="synonym">arcC</name>
    <name type="synonym">arcC-1</name>
</gene>
<comment type="function">
    <text>Catalyzes the reversible synthesis of carbamate and ATP from carbamoyl phosphate and ADP. Can also catalyze, although with low efficiency, the phosphorylation of bicarbonate, leading to the formation of carboxyphosphate, an unstable intermediate found in the reactions catalyzed by carbamoyl-phosphate synthase and biotin carboxylase. Can also use acetate.</text>
</comment>
<comment type="catalytic activity">
    <reaction>
        <text>hydrogencarbonate + NH4(+) + ATP = carbamoyl phosphate + ADP + H2O + H(+)</text>
        <dbReference type="Rhea" id="RHEA:10152"/>
        <dbReference type="ChEBI" id="CHEBI:15377"/>
        <dbReference type="ChEBI" id="CHEBI:15378"/>
        <dbReference type="ChEBI" id="CHEBI:17544"/>
        <dbReference type="ChEBI" id="CHEBI:28938"/>
        <dbReference type="ChEBI" id="CHEBI:30616"/>
        <dbReference type="ChEBI" id="CHEBI:58228"/>
        <dbReference type="ChEBI" id="CHEBI:456216"/>
        <dbReference type="EC" id="2.7.2.2"/>
    </reaction>
</comment>
<comment type="activity regulation">
    <text>Inhibited by adenosine(5')pentaphospho(5')adenosine (Ap5A), Ap6A and to a much lower extent by Ap4A.</text>
</comment>
<comment type="pathway">
    <text>Metabolic intermediate metabolism; carbamoyl phosphate degradation; CO(2) and NH(3) from carbamoyl phosphate: step 1/1.</text>
</comment>
<comment type="subunit">
    <text>Homodimer (predominantly) and homotetramer.</text>
</comment>
<comment type="subcellular location">
    <subcellularLocation>
        <location evidence="4">Cytoplasm</location>
    </subcellularLocation>
</comment>
<comment type="induction">
    <text>By arginine.</text>
</comment>
<comment type="mass spectrometry"/>
<comment type="similarity">
    <text evidence="4">Belongs to the carbamate kinase family.</text>
</comment>
<name>ARCC1_ENTFC</name>
<keyword id="KW-0002">3D-structure</keyword>
<keyword id="KW-0056">Arginine metabolism</keyword>
<keyword id="KW-0067">ATP-binding</keyword>
<keyword id="KW-0963">Cytoplasm</keyword>
<keyword id="KW-0903">Direct protein sequencing</keyword>
<keyword id="KW-0418">Kinase</keyword>
<keyword id="KW-0547">Nucleotide-binding</keyword>
<keyword id="KW-0808">Transferase</keyword>